<gene>
    <name type="primary">rbcL</name>
</gene>
<evidence type="ECO:0000250" key="1"/>
<evidence type="ECO:0000255" key="2">
    <source>
        <dbReference type="PROSITE-ProRule" id="PRU10114"/>
    </source>
</evidence>
<evidence type="ECO:0000305" key="3"/>
<dbReference type="EC" id="4.1.1.39"/>
<dbReference type="EMBL" id="U05613">
    <property type="protein sequence ID" value="AAA19897.1"/>
    <property type="molecule type" value="Genomic_DNA"/>
</dbReference>
<dbReference type="SMR" id="P43229"/>
<dbReference type="GO" id="GO:0009507">
    <property type="term" value="C:chloroplast"/>
    <property type="evidence" value="ECO:0007669"/>
    <property type="project" value="UniProtKB-SubCell"/>
</dbReference>
<dbReference type="GO" id="GO:0000287">
    <property type="term" value="F:magnesium ion binding"/>
    <property type="evidence" value="ECO:0007669"/>
    <property type="project" value="InterPro"/>
</dbReference>
<dbReference type="GO" id="GO:0004497">
    <property type="term" value="F:monooxygenase activity"/>
    <property type="evidence" value="ECO:0007669"/>
    <property type="project" value="UniProtKB-KW"/>
</dbReference>
<dbReference type="GO" id="GO:0016984">
    <property type="term" value="F:ribulose-bisphosphate carboxylase activity"/>
    <property type="evidence" value="ECO:0007669"/>
    <property type="project" value="UniProtKB-EC"/>
</dbReference>
<dbReference type="GO" id="GO:0009853">
    <property type="term" value="P:photorespiration"/>
    <property type="evidence" value="ECO:0007669"/>
    <property type="project" value="UniProtKB-KW"/>
</dbReference>
<dbReference type="GO" id="GO:0019253">
    <property type="term" value="P:reductive pentose-phosphate cycle"/>
    <property type="evidence" value="ECO:0007669"/>
    <property type="project" value="UniProtKB-KW"/>
</dbReference>
<dbReference type="Gene3D" id="3.20.20.110">
    <property type="entry name" value="Ribulose bisphosphate carboxylase, large subunit, C-terminal domain"/>
    <property type="match status" value="1"/>
</dbReference>
<dbReference type="Gene3D" id="3.30.70.150">
    <property type="entry name" value="RuBisCO large subunit, N-terminal domain"/>
    <property type="match status" value="1"/>
</dbReference>
<dbReference type="InterPro" id="IPR033966">
    <property type="entry name" value="RuBisCO"/>
</dbReference>
<dbReference type="InterPro" id="IPR020878">
    <property type="entry name" value="RuBisCo_large_chain_AS"/>
</dbReference>
<dbReference type="InterPro" id="IPR000685">
    <property type="entry name" value="RuBisCO_lsu_C"/>
</dbReference>
<dbReference type="InterPro" id="IPR036376">
    <property type="entry name" value="RuBisCO_lsu_C_sf"/>
</dbReference>
<dbReference type="InterPro" id="IPR017443">
    <property type="entry name" value="RuBisCO_lsu_fd_N"/>
</dbReference>
<dbReference type="InterPro" id="IPR036422">
    <property type="entry name" value="RuBisCO_lsu_N_sf"/>
</dbReference>
<dbReference type="NCBIfam" id="NF003252">
    <property type="entry name" value="PRK04208.1"/>
    <property type="match status" value="1"/>
</dbReference>
<dbReference type="PANTHER" id="PTHR42704">
    <property type="entry name" value="RIBULOSE BISPHOSPHATE CARBOXYLASE"/>
    <property type="match status" value="1"/>
</dbReference>
<dbReference type="PANTHER" id="PTHR42704:SF15">
    <property type="entry name" value="RIBULOSE BISPHOSPHATE CARBOXYLASE LARGE CHAIN"/>
    <property type="match status" value="1"/>
</dbReference>
<dbReference type="Pfam" id="PF00016">
    <property type="entry name" value="RuBisCO_large"/>
    <property type="match status" value="1"/>
</dbReference>
<dbReference type="Pfam" id="PF02788">
    <property type="entry name" value="RuBisCO_large_N"/>
    <property type="match status" value="1"/>
</dbReference>
<dbReference type="SFLD" id="SFLDG01052">
    <property type="entry name" value="RuBisCO"/>
    <property type="match status" value="1"/>
</dbReference>
<dbReference type="SFLD" id="SFLDS00014">
    <property type="entry name" value="RuBisCO"/>
    <property type="match status" value="1"/>
</dbReference>
<dbReference type="SFLD" id="SFLDG00301">
    <property type="entry name" value="RuBisCO-like_proteins"/>
    <property type="match status" value="1"/>
</dbReference>
<dbReference type="SUPFAM" id="SSF51649">
    <property type="entry name" value="RuBisCo, C-terminal domain"/>
    <property type="match status" value="1"/>
</dbReference>
<dbReference type="SUPFAM" id="SSF54966">
    <property type="entry name" value="RuBisCO, large subunit, small (N-terminal) domain"/>
    <property type="match status" value="1"/>
</dbReference>
<dbReference type="PROSITE" id="PS00157">
    <property type="entry name" value="RUBISCO_LARGE"/>
    <property type="match status" value="1"/>
</dbReference>
<proteinExistence type="inferred from homology"/>
<protein>
    <recommendedName>
        <fullName>Ribulose bisphosphate carboxylase large chain</fullName>
        <shortName>RuBisCO large subunit</shortName>
        <ecNumber>4.1.1.39</ecNumber>
    </recommendedName>
</protein>
<accession>P43229</accession>
<organism>
    <name type="scientific">Trichomanes striatum</name>
    <name type="common">Fern</name>
    <name type="synonym">Vandenboschia striata</name>
    <dbReference type="NCBI Taxonomy" id="29625"/>
    <lineage>
        <taxon>Eukaryota</taxon>
        <taxon>Viridiplantae</taxon>
        <taxon>Streptophyta</taxon>
        <taxon>Embryophyta</taxon>
        <taxon>Tracheophyta</taxon>
        <taxon>Polypodiopsida</taxon>
        <taxon>Polypodiidae</taxon>
        <taxon>Hymenophyllales</taxon>
        <taxon>Hymenophyllaceae</taxon>
        <taxon>Trichomanoideae</taxon>
        <taxon>Trichomanes</taxon>
    </lineage>
</organism>
<keyword id="KW-0113">Calvin cycle</keyword>
<keyword id="KW-0120">Carbon dioxide fixation</keyword>
<keyword id="KW-0150">Chloroplast</keyword>
<keyword id="KW-1015">Disulfide bond</keyword>
<keyword id="KW-0456">Lyase</keyword>
<keyword id="KW-0460">Magnesium</keyword>
<keyword id="KW-0479">Metal-binding</keyword>
<keyword id="KW-0503">Monooxygenase</keyword>
<keyword id="KW-0560">Oxidoreductase</keyword>
<keyword id="KW-0601">Photorespiration</keyword>
<keyword id="KW-0602">Photosynthesis</keyword>
<keyword id="KW-0934">Plastid</keyword>
<geneLocation type="chloroplast"/>
<name>RBL_TRISI</name>
<reference key="1">
    <citation type="journal article" date="1994" name="Proc. Natl. Acad. Sci. U.S.A.">
        <title>rbcL gene sequences provide evidence for the evolutionary lineages of leptosporangiate ferns.</title>
        <authorList>
            <person name="Hasebe M."/>
            <person name="Omori T."/>
            <person name="Nakazawa M."/>
            <person name="Sano T."/>
            <person name="Kato M."/>
            <person name="Iwatsuki K."/>
        </authorList>
    </citation>
    <scope>NUCLEOTIDE SEQUENCE [GENOMIC DNA]</scope>
    <source>
        <tissue>Leaf</tissue>
    </source>
</reference>
<comment type="function">
    <text evidence="1">RuBisCO catalyzes two reactions: the carboxylation of D-ribulose 1,5-bisphosphate, the primary event in carbon dioxide fixation, as well as the oxidative fragmentation of the pentose substrate in the photorespiration process. Both reactions occur simultaneously and in competition at the same active site (By similarity).</text>
</comment>
<comment type="catalytic activity">
    <reaction>
        <text>2 (2R)-3-phosphoglycerate + 2 H(+) = D-ribulose 1,5-bisphosphate + CO2 + H2O</text>
        <dbReference type="Rhea" id="RHEA:23124"/>
        <dbReference type="ChEBI" id="CHEBI:15377"/>
        <dbReference type="ChEBI" id="CHEBI:15378"/>
        <dbReference type="ChEBI" id="CHEBI:16526"/>
        <dbReference type="ChEBI" id="CHEBI:57870"/>
        <dbReference type="ChEBI" id="CHEBI:58272"/>
        <dbReference type="EC" id="4.1.1.39"/>
    </reaction>
</comment>
<comment type="catalytic activity">
    <reaction>
        <text>D-ribulose 1,5-bisphosphate + O2 = 2-phosphoglycolate + (2R)-3-phosphoglycerate + 2 H(+)</text>
        <dbReference type="Rhea" id="RHEA:36631"/>
        <dbReference type="ChEBI" id="CHEBI:15378"/>
        <dbReference type="ChEBI" id="CHEBI:15379"/>
        <dbReference type="ChEBI" id="CHEBI:57870"/>
        <dbReference type="ChEBI" id="CHEBI:58033"/>
        <dbReference type="ChEBI" id="CHEBI:58272"/>
    </reaction>
</comment>
<comment type="cofactor">
    <cofactor evidence="1">
        <name>Mg(2+)</name>
        <dbReference type="ChEBI" id="CHEBI:18420"/>
    </cofactor>
    <text evidence="1">Binds 1 Mg(2+) ion per subunit.</text>
</comment>
<comment type="subunit">
    <text evidence="1">Heterohexadecamer of 8 large chains and 8 small chains; disulfide-linked. The disulfide link is formed within the large subunit homodimers (By similarity).</text>
</comment>
<comment type="subcellular location">
    <subcellularLocation>
        <location>Plastid</location>
        <location>Chloroplast</location>
    </subcellularLocation>
</comment>
<comment type="PTM">
    <text evidence="1">The disulfide bond which can form in the large chain dimeric partners within the hexadecamer appears to be associated with oxidative stress and protein turnover.</text>
</comment>
<comment type="miscellaneous">
    <text evidence="1">The basic functional RuBisCO is composed of a large chain homodimer in a 'head-to-tail' conformation. In form I RuBisCO this homodimer is arranged in a barrel-like tetramer with the small subunits forming a tetrameric 'cap' on each end of the 'barrel' (By similarity).</text>
</comment>
<comment type="similarity">
    <text evidence="3">Belongs to the RuBisCO large chain family. Type I subfamily.</text>
</comment>
<feature type="chain" id="PRO_0000062427" description="Ribulose bisphosphate carboxylase large chain">
    <location>
        <begin position="1" status="less than"/>
        <end position="406" status="greater than"/>
    </location>
</feature>
<feature type="active site" description="Proton acceptor" evidence="1">
    <location>
        <position position="153"/>
    </location>
</feature>
<feature type="active site" description="Proton acceptor" evidence="1">
    <location>
        <position position="272"/>
    </location>
</feature>
<feature type="binding site" description="in homodimeric partner" evidence="1">
    <location>
        <position position="101"/>
    </location>
    <ligand>
        <name>substrate</name>
    </ligand>
</feature>
<feature type="binding site" evidence="1">
    <location>
        <position position="151"/>
    </location>
    <ligand>
        <name>substrate</name>
    </ligand>
</feature>
<feature type="binding site" evidence="1">
    <location>
        <position position="155"/>
    </location>
    <ligand>
        <name>substrate</name>
    </ligand>
</feature>
<feature type="binding site" description="via carbamate group" evidence="2">
    <location>
        <position position="179"/>
    </location>
    <ligand>
        <name>Mg(2+)</name>
        <dbReference type="ChEBI" id="CHEBI:18420"/>
    </ligand>
</feature>
<feature type="binding site" evidence="2">
    <location>
        <position position="181"/>
    </location>
    <ligand>
        <name>Mg(2+)</name>
        <dbReference type="ChEBI" id="CHEBI:18420"/>
    </ligand>
</feature>
<feature type="binding site" evidence="2">
    <location>
        <position position="182"/>
    </location>
    <ligand>
        <name>Mg(2+)</name>
        <dbReference type="ChEBI" id="CHEBI:18420"/>
    </ligand>
</feature>
<feature type="binding site" evidence="1">
    <location>
        <position position="273"/>
    </location>
    <ligand>
        <name>substrate</name>
    </ligand>
</feature>
<feature type="binding site" evidence="1">
    <location>
        <position position="305"/>
    </location>
    <ligand>
        <name>substrate</name>
    </ligand>
</feature>
<feature type="binding site" evidence="1">
    <location>
        <position position="357"/>
    </location>
    <ligand>
        <name>substrate</name>
    </ligand>
</feature>
<feature type="site" description="Transition state stabilizer" evidence="1">
    <location>
        <position position="312"/>
    </location>
</feature>
<feature type="modified residue" description="N6-carboxylysine" evidence="2">
    <location>
        <position position="179"/>
    </location>
</feature>
<feature type="disulfide bond" description="Interchain; in linked form" evidence="1">
    <location>
        <position position="225"/>
    </location>
</feature>
<feature type="non-terminal residue">
    <location>
        <position position="1"/>
    </location>
</feature>
<feature type="non-terminal residue">
    <location>
        <position position="406"/>
    </location>
</feature>
<sequence>NYYTPDYETKGTDILAAFRMTPQPGVPPEEAGAAVAAESSTGTWTTVWTDGLTSLDRYKGRCYDIEPVAGEEHQFIAYVAYPLDLFEEGSVTNLFTSIVGNVFGFKALRALRLGDLRIPPSYSKTFMGPPHGIQVERDKLNKYGRPFLGCTIKPKLGLSAKNYGRAVYECLRGGLDFTKDDENVNSQPFMRWRDRFLFVAEALFKAQSETGEVKGHYLNATAGTCEEMFKRAIFARELGAPIVMHDYLTGGFTANTSLAYYCRDNGLLLHIHRAMHAVIDRQKNHGMHFRVLAKALRMSGGDHFHSGTVVGKLEGERDITLGFVDLLRDDYIDKDRSRGIYFTQDWVSMPGVLPVASGGIHVWHMPALTEIFGDDSVLQFGGGTLGHPWGNAPGAVANRVALVACV</sequence>